<gene>
    <name evidence="1" type="primary">murE</name>
    <name type="ordered locus">BB_0201</name>
</gene>
<keyword id="KW-0067">ATP-binding</keyword>
<keyword id="KW-0131">Cell cycle</keyword>
<keyword id="KW-0132">Cell division</keyword>
<keyword id="KW-0133">Cell shape</keyword>
<keyword id="KW-0961">Cell wall biogenesis/degradation</keyword>
<keyword id="KW-0963">Cytoplasm</keyword>
<keyword id="KW-0436">Ligase</keyword>
<keyword id="KW-0547">Nucleotide-binding</keyword>
<keyword id="KW-0573">Peptidoglycan synthesis</keyword>
<keyword id="KW-1185">Reference proteome</keyword>
<comment type="function">
    <text evidence="1">Catalyzes the addition of an amino acid to the nucleotide precursor UDP-N-acetylmuramoyl-L-alanyl-D-glutamate (UMAG) in the biosynthesis of bacterial cell-wall peptidoglycan.</text>
</comment>
<comment type="pathway">
    <text evidence="1">Cell wall biogenesis; peptidoglycan biosynthesis.</text>
</comment>
<comment type="subcellular location">
    <subcellularLocation>
        <location evidence="1">Cytoplasm</location>
    </subcellularLocation>
</comment>
<comment type="PTM">
    <text evidence="1">Carboxylation is probably crucial for Mg(2+) binding and, consequently, for the gamma-phosphate positioning of ATP.</text>
</comment>
<comment type="similarity">
    <text evidence="1">Belongs to the MurCDEF family. MurE subfamily.</text>
</comment>
<feature type="chain" id="PRO_0000101869" description="UDP-N-acetylmuramyl-tripeptide synthetase">
    <location>
        <begin position="1"/>
        <end position="508"/>
    </location>
</feature>
<feature type="binding site" evidence="1">
    <location>
        <position position="35"/>
    </location>
    <ligand>
        <name>UDP-N-acetyl-alpha-D-muramoyl-L-alanyl-D-glutamate</name>
        <dbReference type="ChEBI" id="CHEBI:83900"/>
    </ligand>
</feature>
<feature type="binding site" evidence="1">
    <location>
        <begin position="118"/>
        <end position="124"/>
    </location>
    <ligand>
        <name>ATP</name>
        <dbReference type="ChEBI" id="CHEBI:30616"/>
    </ligand>
</feature>
<feature type="binding site" evidence="1">
    <location>
        <begin position="163"/>
        <end position="164"/>
    </location>
    <ligand>
        <name>UDP-N-acetyl-alpha-D-muramoyl-L-alanyl-D-glutamate</name>
        <dbReference type="ChEBI" id="CHEBI:83900"/>
    </ligand>
</feature>
<feature type="binding site" evidence="1">
    <location>
        <position position="190"/>
    </location>
    <ligand>
        <name>UDP-N-acetyl-alpha-D-muramoyl-L-alanyl-D-glutamate</name>
        <dbReference type="ChEBI" id="CHEBI:83900"/>
    </ligand>
</feature>
<feature type="binding site" evidence="1">
    <location>
        <position position="200"/>
    </location>
    <ligand>
        <name>UDP-N-acetyl-alpha-D-muramoyl-L-alanyl-D-glutamate</name>
        <dbReference type="ChEBI" id="CHEBI:83900"/>
    </ligand>
</feature>
<feature type="modified residue" description="N6-carboxylysine" evidence="1">
    <location>
        <position position="232"/>
    </location>
</feature>
<dbReference type="EC" id="6.3.2.-" evidence="1"/>
<dbReference type="EMBL" id="AE000783">
    <property type="protein sequence ID" value="AAC66588.1"/>
    <property type="molecule type" value="Genomic_DNA"/>
</dbReference>
<dbReference type="PIR" id="A70125">
    <property type="entry name" value="A70125"/>
</dbReference>
<dbReference type="RefSeq" id="NP_212335.1">
    <property type="nucleotide sequence ID" value="NC_001318.1"/>
</dbReference>
<dbReference type="RefSeq" id="WP_002657618.1">
    <property type="nucleotide sequence ID" value="NC_001318.1"/>
</dbReference>
<dbReference type="SMR" id="O51219"/>
<dbReference type="STRING" id="224326.BB_0201"/>
<dbReference type="PaxDb" id="224326-BB_0201"/>
<dbReference type="EnsemblBacteria" id="AAC66588">
    <property type="protein sequence ID" value="AAC66588"/>
    <property type="gene ID" value="BB_0201"/>
</dbReference>
<dbReference type="KEGG" id="bbu:BB_0201"/>
<dbReference type="PATRIC" id="fig|224326.49.peg.597"/>
<dbReference type="HOGENOM" id="CLU_022291_4_1_12"/>
<dbReference type="OrthoDB" id="9800958at2"/>
<dbReference type="UniPathway" id="UPA00219"/>
<dbReference type="Proteomes" id="UP000001807">
    <property type="component" value="Chromosome"/>
</dbReference>
<dbReference type="GO" id="GO:0005737">
    <property type="term" value="C:cytoplasm"/>
    <property type="evidence" value="ECO:0007669"/>
    <property type="project" value="UniProtKB-SubCell"/>
</dbReference>
<dbReference type="GO" id="GO:0016881">
    <property type="term" value="F:acid-amino acid ligase activity"/>
    <property type="evidence" value="ECO:0007669"/>
    <property type="project" value="UniProtKB-UniRule"/>
</dbReference>
<dbReference type="GO" id="GO:0005524">
    <property type="term" value="F:ATP binding"/>
    <property type="evidence" value="ECO:0007669"/>
    <property type="project" value="UniProtKB-UniRule"/>
</dbReference>
<dbReference type="GO" id="GO:0000287">
    <property type="term" value="F:magnesium ion binding"/>
    <property type="evidence" value="ECO:0007669"/>
    <property type="project" value="UniProtKB-UniRule"/>
</dbReference>
<dbReference type="GO" id="GO:0051301">
    <property type="term" value="P:cell division"/>
    <property type="evidence" value="ECO:0007669"/>
    <property type="project" value="UniProtKB-KW"/>
</dbReference>
<dbReference type="GO" id="GO:0071555">
    <property type="term" value="P:cell wall organization"/>
    <property type="evidence" value="ECO:0007669"/>
    <property type="project" value="UniProtKB-KW"/>
</dbReference>
<dbReference type="GO" id="GO:0009252">
    <property type="term" value="P:peptidoglycan biosynthetic process"/>
    <property type="evidence" value="ECO:0007669"/>
    <property type="project" value="UniProtKB-UniRule"/>
</dbReference>
<dbReference type="GO" id="GO:0008360">
    <property type="term" value="P:regulation of cell shape"/>
    <property type="evidence" value="ECO:0007669"/>
    <property type="project" value="UniProtKB-KW"/>
</dbReference>
<dbReference type="Gene3D" id="3.90.190.20">
    <property type="entry name" value="Mur ligase, C-terminal domain"/>
    <property type="match status" value="1"/>
</dbReference>
<dbReference type="Gene3D" id="3.40.1190.10">
    <property type="entry name" value="Mur-like, catalytic domain"/>
    <property type="match status" value="1"/>
</dbReference>
<dbReference type="Gene3D" id="3.40.1390.10">
    <property type="entry name" value="MurE/MurF, N-terminal domain"/>
    <property type="match status" value="1"/>
</dbReference>
<dbReference type="HAMAP" id="MF_00208">
    <property type="entry name" value="MurE"/>
    <property type="match status" value="1"/>
</dbReference>
<dbReference type="InterPro" id="IPR036565">
    <property type="entry name" value="Mur-like_cat_sf"/>
</dbReference>
<dbReference type="InterPro" id="IPR004101">
    <property type="entry name" value="Mur_ligase_C"/>
</dbReference>
<dbReference type="InterPro" id="IPR036615">
    <property type="entry name" value="Mur_ligase_C_dom_sf"/>
</dbReference>
<dbReference type="InterPro" id="IPR013221">
    <property type="entry name" value="Mur_ligase_cen"/>
</dbReference>
<dbReference type="InterPro" id="IPR000713">
    <property type="entry name" value="Mur_ligase_N"/>
</dbReference>
<dbReference type="InterPro" id="IPR035911">
    <property type="entry name" value="MurE/MurF_N"/>
</dbReference>
<dbReference type="InterPro" id="IPR005761">
    <property type="entry name" value="UDP-N-AcMur-Glu-dNH2Pim_ligase"/>
</dbReference>
<dbReference type="NCBIfam" id="TIGR01085">
    <property type="entry name" value="murE"/>
    <property type="match status" value="1"/>
</dbReference>
<dbReference type="NCBIfam" id="NF001126">
    <property type="entry name" value="PRK00139.1-4"/>
    <property type="match status" value="1"/>
</dbReference>
<dbReference type="PANTHER" id="PTHR23135">
    <property type="entry name" value="MUR LIGASE FAMILY MEMBER"/>
    <property type="match status" value="1"/>
</dbReference>
<dbReference type="PANTHER" id="PTHR23135:SF4">
    <property type="entry name" value="UDP-N-ACETYLMURAMOYL-L-ALANYL-D-GLUTAMATE--2,6-DIAMINOPIMELATE LIGASE MURE HOMOLOG, CHLOROPLASTIC"/>
    <property type="match status" value="1"/>
</dbReference>
<dbReference type="Pfam" id="PF01225">
    <property type="entry name" value="Mur_ligase"/>
    <property type="match status" value="1"/>
</dbReference>
<dbReference type="Pfam" id="PF02875">
    <property type="entry name" value="Mur_ligase_C"/>
    <property type="match status" value="1"/>
</dbReference>
<dbReference type="Pfam" id="PF08245">
    <property type="entry name" value="Mur_ligase_M"/>
    <property type="match status" value="1"/>
</dbReference>
<dbReference type="SUPFAM" id="SSF53623">
    <property type="entry name" value="MurD-like peptide ligases, catalytic domain"/>
    <property type="match status" value="1"/>
</dbReference>
<dbReference type="SUPFAM" id="SSF53244">
    <property type="entry name" value="MurD-like peptide ligases, peptide-binding domain"/>
    <property type="match status" value="1"/>
</dbReference>
<dbReference type="SUPFAM" id="SSF63418">
    <property type="entry name" value="MurE/MurF N-terminal domain"/>
    <property type="match status" value="1"/>
</dbReference>
<accession>O51219</accession>
<proteinExistence type="inferred from homology"/>
<organism>
    <name type="scientific">Borreliella burgdorferi (strain ATCC 35210 / DSM 4680 / CIP 102532 / B31)</name>
    <name type="common">Borrelia burgdorferi</name>
    <dbReference type="NCBI Taxonomy" id="224326"/>
    <lineage>
        <taxon>Bacteria</taxon>
        <taxon>Pseudomonadati</taxon>
        <taxon>Spirochaetota</taxon>
        <taxon>Spirochaetia</taxon>
        <taxon>Spirochaetales</taxon>
        <taxon>Borreliaceae</taxon>
        <taxon>Borreliella</taxon>
    </lineage>
</organism>
<protein>
    <recommendedName>
        <fullName evidence="1">UDP-N-acetylmuramyl-tripeptide synthetase</fullName>
        <ecNumber evidence="1">6.3.2.-</ecNumber>
    </recommendedName>
    <alternativeName>
        <fullName evidence="1">UDP-MurNAc-tripeptide synthetase</fullName>
    </alternativeName>
</protein>
<evidence type="ECO:0000255" key="1">
    <source>
        <dbReference type="HAMAP-Rule" id="MF_00208"/>
    </source>
</evidence>
<sequence length="508" mass="57149">MNKKLNEVLLKLDQDLIKCVKGSLDLEISGVTYSSKLVLPRFVFFALPGIHFDGHDFIEIAIQKGSNVVVCSRDVDFYSPNVTYIKVDDFNIRKFMSNFSNIFYDEPSKKLKVIGVTGTDGKSSVCYYIYLLFKKKGVKVGFISTVFFDDGSGSLIKNPYRQSTPESTEIHSFLSTMVKNEAQYAILESTSHGLDLETARLIDVNYFAVVFTNIGHEHLEFHGTIQNYLNVKLGLFRSVSDDAGFGVINLDDLYSSDFKNAVKKSFTYSLKSSKADFFVSFIDEKTDSTRFEFYHKGVKYLANVSLLGSFNVENVMAALILVSQILNIDIQDIVDKLNCIKSLDGRMDSINLGQNFSVIIDYAHTPGAFSKLFPIFKRFATNRLISVFGSAGERDVEKRFLQGQIADIYSDLIILCDEDPRGENSMCIIKDIAKGIVNKVENKDLFFIADRKQAIEKAISLAKAGDLVVALGKGHESSIIYKNREVFWNEQEVVKNAILSLEKSEKEK</sequence>
<reference key="1">
    <citation type="journal article" date="1997" name="Nature">
        <title>Genomic sequence of a Lyme disease spirochaete, Borrelia burgdorferi.</title>
        <authorList>
            <person name="Fraser C.M."/>
            <person name="Casjens S."/>
            <person name="Huang W.M."/>
            <person name="Sutton G.G."/>
            <person name="Clayton R.A."/>
            <person name="Lathigra R."/>
            <person name="White O."/>
            <person name="Ketchum K.A."/>
            <person name="Dodson R.J."/>
            <person name="Hickey E.K."/>
            <person name="Gwinn M.L."/>
            <person name="Dougherty B.A."/>
            <person name="Tomb J.-F."/>
            <person name="Fleischmann R.D."/>
            <person name="Richardson D.L."/>
            <person name="Peterson J.D."/>
            <person name="Kerlavage A.R."/>
            <person name="Quackenbush J."/>
            <person name="Salzberg S.L."/>
            <person name="Hanson M."/>
            <person name="van Vugt R."/>
            <person name="Palmer N."/>
            <person name="Adams M.D."/>
            <person name="Gocayne J.D."/>
            <person name="Weidman J.F."/>
            <person name="Utterback T.R."/>
            <person name="Watthey L."/>
            <person name="McDonald L.A."/>
            <person name="Artiach P."/>
            <person name="Bowman C."/>
            <person name="Garland S.A."/>
            <person name="Fujii C."/>
            <person name="Cotton M.D."/>
            <person name="Horst K."/>
            <person name="Roberts K.M."/>
            <person name="Hatch B."/>
            <person name="Smith H.O."/>
            <person name="Venter J.C."/>
        </authorList>
    </citation>
    <scope>NUCLEOTIDE SEQUENCE [LARGE SCALE GENOMIC DNA]</scope>
    <source>
        <strain>ATCC 35210 / DSM 4680 / CIP 102532 / B31</strain>
    </source>
</reference>
<name>MURE_BORBU</name>